<name>RL14_RHIR8</name>
<reference key="1">
    <citation type="journal article" date="2009" name="J. Bacteriol.">
        <title>Genome sequences of three Agrobacterium biovars help elucidate the evolution of multichromosome genomes in bacteria.</title>
        <authorList>
            <person name="Slater S.C."/>
            <person name="Goldman B.S."/>
            <person name="Goodner B."/>
            <person name="Setubal J.C."/>
            <person name="Farrand S.K."/>
            <person name="Nester E.W."/>
            <person name="Burr T.J."/>
            <person name="Banta L."/>
            <person name="Dickerman A.W."/>
            <person name="Paulsen I."/>
            <person name="Otten L."/>
            <person name="Suen G."/>
            <person name="Welch R."/>
            <person name="Almeida N.F."/>
            <person name="Arnold F."/>
            <person name="Burton O.T."/>
            <person name="Du Z."/>
            <person name="Ewing A."/>
            <person name="Godsy E."/>
            <person name="Heisel S."/>
            <person name="Houmiel K.L."/>
            <person name="Jhaveri J."/>
            <person name="Lu J."/>
            <person name="Miller N.M."/>
            <person name="Norton S."/>
            <person name="Chen Q."/>
            <person name="Phoolcharoen W."/>
            <person name="Ohlin V."/>
            <person name="Ondrusek D."/>
            <person name="Pride N."/>
            <person name="Stricklin S.L."/>
            <person name="Sun J."/>
            <person name="Wheeler C."/>
            <person name="Wilson L."/>
            <person name="Zhu H."/>
            <person name="Wood D.W."/>
        </authorList>
    </citation>
    <scope>NUCLEOTIDE SEQUENCE [LARGE SCALE GENOMIC DNA]</scope>
    <source>
        <strain>K84 / ATCC BAA-868</strain>
    </source>
</reference>
<organism>
    <name type="scientific">Rhizobium rhizogenes (strain K84 / ATCC BAA-868)</name>
    <name type="common">Agrobacterium radiobacter</name>
    <dbReference type="NCBI Taxonomy" id="311403"/>
    <lineage>
        <taxon>Bacteria</taxon>
        <taxon>Pseudomonadati</taxon>
        <taxon>Pseudomonadota</taxon>
        <taxon>Alphaproteobacteria</taxon>
        <taxon>Hyphomicrobiales</taxon>
        <taxon>Rhizobiaceae</taxon>
        <taxon>Rhizobium/Agrobacterium group</taxon>
        <taxon>Rhizobium</taxon>
    </lineage>
</organism>
<keyword id="KW-0687">Ribonucleoprotein</keyword>
<keyword id="KW-0689">Ribosomal protein</keyword>
<keyword id="KW-0694">RNA-binding</keyword>
<keyword id="KW-0699">rRNA-binding</keyword>
<proteinExistence type="inferred from homology"/>
<protein>
    <recommendedName>
        <fullName evidence="1">Large ribosomal subunit protein uL14</fullName>
    </recommendedName>
    <alternativeName>
        <fullName evidence="2">50S ribosomal protein L14</fullName>
    </alternativeName>
</protein>
<feature type="chain" id="PRO_1000166889" description="Large ribosomal subunit protein uL14">
    <location>
        <begin position="1"/>
        <end position="122"/>
    </location>
</feature>
<gene>
    <name evidence="1" type="primary">rplN</name>
    <name type="ordered locus">Arad_1985</name>
</gene>
<dbReference type="EMBL" id="CP000628">
    <property type="protein sequence ID" value="ACM26289.1"/>
    <property type="molecule type" value="Genomic_DNA"/>
</dbReference>
<dbReference type="RefSeq" id="WP_003573790.1">
    <property type="nucleotide sequence ID" value="NC_011985.1"/>
</dbReference>
<dbReference type="SMR" id="B9JDT8"/>
<dbReference type="STRING" id="311403.Arad_1985"/>
<dbReference type="GeneID" id="91148138"/>
<dbReference type="KEGG" id="ara:Arad_1985"/>
<dbReference type="eggNOG" id="COG0093">
    <property type="taxonomic scope" value="Bacteria"/>
</dbReference>
<dbReference type="HOGENOM" id="CLU_095071_2_1_5"/>
<dbReference type="Proteomes" id="UP000001600">
    <property type="component" value="Chromosome 1"/>
</dbReference>
<dbReference type="GO" id="GO:0022625">
    <property type="term" value="C:cytosolic large ribosomal subunit"/>
    <property type="evidence" value="ECO:0007669"/>
    <property type="project" value="TreeGrafter"/>
</dbReference>
<dbReference type="GO" id="GO:0070180">
    <property type="term" value="F:large ribosomal subunit rRNA binding"/>
    <property type="evidence" value="ECO:0007669"/>
    <property type="project" value="TreeGrafter"/>
</dbReference>
<dbReference type="GO" id="GO:0003735">
    <property type="term" value="F:structural constituent of ribosome"/>
    <property type="evidence" value="ECO:0007669"/>
    <property type="project" value="InterPro"/>
</dbReference>
<dbReference type="GO" id="GO:0006412">
    <property type="term" value="P:translation"/>
    <property type="evidence" value="ECO:0007669"/>
    <property type="project" value="UniProtKB-UniRule"/>
</dbReference>
<dbReference type="CDD" id="cd00337">
    <property type="entry name" value="Ribosomal_uL14"/>
    <property type="match status" value="1"/>
</dbReference>
<dbReference type="FunFam" id="2.40.150.20:FF:000001">
    <property type="entry name" value="50S ribosomal protein L14"/>
    <property type="match status" value="1"/>
</dbReference>
<dbReference type="Gene3D" id="2.40.150.20">
    <property type="entry name" value="Ribosomal protein L14"/>
    <property type="match status" value="1"/>
</dbReference>
<dbReference type="HAMAP" id="MF_01367">
    <property type="entry name" value="Ribosomal_uL14"/>
    <property type="match status" value="1"/>
</dbReference>
<dbReference type="InterPro" id="IPR000218">
    <property type="entry name" value="Ribosomal_uL14"/>
</dbReference>
<dbReference type="InterPro" id="IPR005745">
    <property type="entry name" value="Ribosomal_uL14_bac-type"/>
</dbReference>
<dbReference type="InterPro" id="IPR019972">
    <property type="entry name" value="Ribosomal_uL14_CS"/>
</dbReference>
<dbReference type="InterPro" id="IPR036853">
    <property type="entry name" value="Ribosomal_uL14_sf"/>
</dbReference>
<dbReference type="NCBIfam" id="TIGR01067">
    <property type="entry name" value="rplN_bact"/>
    <property type="match status" value="1"/>
</dbReference>
<dbReference type="PANTHER" id="PTHR11761">
    <property type="entry name" value="50S/60S RIBOSOMAL PROTEIN L14/L23"/>
    <property type="match status" value="1"/>
</dbReference>
<dbReference type="PANTHER" id="PTHR11761:SF3">
    <property type="entry name" value="LARGE RIBOSOMAL SUBUNIT PROTEIN UL14M"/>
    <property type="match status" value="1"/>
</dbReference>
<dbReference type="Pfam" id="PF00238">
    <property type="entry name" value="Ribosomal_L14"/>
    <property type="match status" value="1"/>
</dbReference>
<dbReference type="SMART" id="SM01374">
    <property type="entry name" value="Ribosomal_L14"/>
    <property type="match status" value="1"/>
</dbReference>
<dbReference type="SUPFAM" id="SSF50193">
    <property type="entry name" value="Ribosomal protein L14"/>
    <property type="match status" value="1"/>
</dbReference>
<dbReference type="PROSITE" id="PS00049">
    <property type="entry name" value="RIBOSOMAL_L14"/>
    <property type="match status" value="1"/>
</dbReference>
<comment type="function">
    <text evidence="1">Binds to 23S rRNA. Forms part of two intersubunit bridges in the 70S ribosome.</text>
</comment>
<comment type="subunit">
    <text evidence="1">Part of the 50S ribosomal subunit. Forms a cluster with proteins L3 and L19. In the 70S ribosome, L14 and L19 interact and together make contacts with the 16S rRNA in bridges B5 and B8.</text>
</comment>
<comment type="similarity">
    <text evidence="1">Belongs to the universal ribosomal protein uL14 family.</text>
</comment>
<accession>B9JDT8</accession>
<sequence>MIQMQTNLDVADNSGARRVMCIKVLGGSKRKYASIGDVIVVSIKEAIPRGRVKKGDVMKAVVVRTAKDIRRPDGSVIRFDTNAAVLIDNKKEPIGTRIFGPVPRELRAKNHMKIISLAPEVL</sequence>
<evidence type="ECO:0000255" key="1">
    <source>
        <dbReference type="HAMAP-Rule" id="MF_01367"/>
    </source>
</evidence>
<evidence type="ECO:0000305" key="2"/>